<evidence type="ECO:0000255" key="1">
    <source>
        <dbReference type="HAMAP-Rule" id="MF_00172"/>
    </source>
</evidence>
<sequence length="758" mass="85147">MTTLHFSGFPRVGAFRELKFAQEKYWRKEISEQELLAVAKDLREKNWKHQAAANADFVAVGDFTFYDHILDLQVATGAIPARFGFDSQNLSLEQFFQLARGNKDQFAIEMTKWFDTNYHYLVPEFHADTEFKANAKHYVQQLQEAQALGLKAKPTVVGPLTFLWVGKEKGTVEFNRLSLLQKLLPVYVEILNALVEAGAEWIQIDEPALTVDLPKEWVEAYKDVYATLSKVSAKILLSTYFGSVAEHAALLKSLPVDGLHIDLVRAPEQLDAFADYDKVLSAGIIDGRNIWRANLNKVLETVEPLQAKLGDRLWISSSCSLLHTPFDLSVEEKLKANKPDLYSWLAFTLQKTQELRVLKAALNEGRDSVAEELAASQAAADSRANSSEIHRADVAKRLADLPANADQRKSPFADRIKAQQAWLNLPLLPTTNIGSFPQTTEIRQARAAFKKGELSAADYEAAMKKEIALVVEEQEKLDLDVLVHGEAERNDMVEYFGELLSGFAFTQYGWVQSYGSRCVKPPIIFGDVSRPEAMTVAWSTYAQSLTKRPMKGMLTGPVTILQWSFVRNDIPRSTVCKQIALALNDEVLDLEKAGIKVIQIDEPAIREGLPLKRADWDAYLNWAGESFRLSSAGCEDSTQIHTHMCYSEFNDILPAIAAMDADVITIETSRSDMELLTAFGEFKYPNDIGPGVYDIHSPRVPTEAEVEHLLRKAIEVVPVERLWVNPDCGLKTRGWKETLEQLQVMMNVTHKLRAELAK</sequence>
<reference key="1">
    <citation type="journal article" date="2007" name="PLoS Genet.">
        <title>Meningococcal genetic variation mechanisms viewed through comparative analysis of serogroup C strain FAM18.</title>
        <authorList>
            <person name="Bentley S.D."/>
            <person name="Vernikos G.S."/>
            <person name="Snyder L.A.S."/>
            <person name="Churcher C."/>
            <person name="Arrowsmith C."/>
            <person name="Chillingworth T."/>
            <person name="Cronin A."/>
            <person name="Davis P.H."/>
            <person name="Holroyd N.E."/>
            <person name="Jagels K."/>
            <person name="Maddison M."/>
            <person name="Moule S."/>
            <person name="Rabbinowitsch E."/>
            <person name="Sharp S."/>
            <person name="Unwin L."/>
            <person name="Whitehead S."/>
            <person name="Quail M.A."/>
            <person name="Achtman M."/>
            <person name="Barrell B.G."/>
            <person name="Saunders N.J."/>
            <person name="Parkhill J."/>
        </authorList>
    </citation>
    <scope>NUCLEOTIDE SEQUENCE [LARGE SCALE GENOMIC DNA]</scope>
    <source>
        <strain>ATCC 700532 / DSM 15464 / FAM18</strain>
    </source>
</reference>
<comment type="function">
    <text evidence="1">Catalyzes the transfer of a methyl group from 5-methyltetrahydrofolate to homocysteine resulting in methionine formation.</text>
</comment>
<comment type="catalytic activity">
    <reaction evidence="1">
        <text>5-methyltetrahydropteroyltri-L-glutamate + L-homocysteine = tetrahydropteroyltri-L-glutamate + L-methionine</text>
        <dbReference type="Rhea" id="RHEA:21196"/>
        <dbReference type="ChEBI" id="CHEBI:57844"/>
        <dbReference type="ChEBI" id="CHEBI:58140"/>
        <dbReference type="ChEBI" id="CHEBI:58199"/>
        <dbReference type="ChEBI" id="CHEBI:58207"/>
        <dbReference type="EC" id="2.1.1.14"/>
    </reaction>
</comment>
<comment type="cofactor">
    <cofactor evidence="1">
        <name>Zn(2+)</name>
        <dbReference type="ChEBI" id="CHEBI:29105"/>
    </cofactor>
    <text evidence="1">Binds 1 zinc ion per subunit.</text>
</comment>
<comment type="pathway">
    <text evidence="1">Amino-acid biosynthesis; L-methionine biosynthesis via de novo pathway; L-methionine from L-homocysteine (MetE route): step 1/1.</text>
</comment>
<comment type="similarity">
    <text evidence="1">Belongs to the vitamin-B12 independent methionine synthase family.</text>
</comment>
<name>METE_NEIMF</name>
<keyword id="KW-0028">Amino-acid biosynthesis</keyword>
<keyword id="KW-0479">Metal-binding</keyword>
<keyword id="KW-0486">Methionine biosynthesis</keyword>
<keyword id="KW-0489">Methyltransferase</keyword>
<keyword id="KW-0677">Repeat</keyword>
<keyword id="KW-0808">Transferase</keyword>
<keyword id="KW-0862">Zinc</keyword>
<organism>
    <name type="scientific">Neisseria meningitidis serogroup C / serotype 2a (strain ATCC 700532 / DSM 15464 / FAM18)</name>
    <dbReference type="NCBI Taxonomy" id="272831"/>
    <lineage>
        <taxon>Bacteria</taxon>
        <taxon>Pseudomonadati</taxon>
        <taxon>Pseudomonadota</taxon>
        <taxon>Betaproteobacteria</taxon>
        <taxon>Neisseriales</taxon>
        <taxon>Neisseriaceae</taxon>
        <taxon>Neisseria</taxon>
    </lineage>
</organism>
<gene>
    <name evidence="1" type="primary">metE</name>
    <name type="ordered locus">NMC0922</name>
</gene>
<dbReference type="EC" id="2.1.1.14" evidence="1"/>
<dbReference type="EMBL" id="AM421808">
    <property type="protein sequence ID" value="CAM10199.1"/>
    <property type="molecule type" value="Genomic_DNA"/>
</dbReference>
<dbReference type="RefSeq" id="WP_002221129.1">
    <property type="nucleotide sequence ID" value="NC_008767.1"/>
</dbReference>
<dbReference type="SMR" id="A1KTL3"/>
<dbReference type="KEGG" id="nmc:NMC0922"/>
<dbReference type="HOGENOM" id="CLU_013175_0_0_4"/>
<dbReference type="UniPathway" id="UPA00051">
    <property type="reaction ID" value="UER00082"/>
</dbReference>
<dbReference type="Proteomes" id="UP000002286">
    <property type="component" value="Chromosome"/>
</dbReference>
<dbReference type="GO" id="GO:0003871">
    <property type="term" value="F:5-methyltetrahydropteroyltriglutamate-homocysteine S-methyltransferase activity"/>
    <property type="evidence" value="ECO:0007669"/>
    <property type="project" value="UniProtKB-UniRule"/>
</dbReference>
<dbReference type="GO" id="GO:0008270">
    <property type="term" value="F:zinc ion binding"/>
    <property type="evidence" value="ECO:0007669"/>
    <property type="project" value="InterPro"/>
</dbReference>
<dbReference type="GO" id="GO:0009086">
    <property type="term" value="P:methionine biosynthetic process"/>
    <property type="evidence" value="ECO:0007669"/>
    <property type="project" value="UniProtKB-UniRule"/>
</dbReference>
<dbReference type="GO" id="GO:0032259">
    <property type="term" value="P:methylation"/>
    <property type="evidence" value="ECO:0007669"/>
    <property type="project" value="UniProtKB-KW"/>
</dbReference>
<dbReference type="CDD" id="cd03311">
    <property type="entry name" value="CIMS_C_terminal_like"/>
    <property type="match status" value="1"/>
</dbReference>
<dbReference type="CDD" id="cd03312">
    <property type="entry name" value="CIMS_N_terminal_like"/>
    <property type="match status" value="1"/>
</dbReference>
<dbReference type="FunFam" id="3.20.20.210:FF:000002">
    <property type="entry name" value="5-methyltetrahydropteroyltriglutamate--homocysteine methyltransferase"/>
    <property type="match status" value="1"/>
</dbReference>
<dbReference type="Gene3D" id="3.20.20.210">
    <property type="match status" value="2"/>
</dbReference>
<dbReference type="HAMAP" id="MF_00172">
    <property type="entry name" value="Meth_synth"/>
    <property type="match status" value="1"/>
</dbReference>
<dbReference type="InterPro" id="IPR013215">
    <property type="entry name" value="Cbl-indep_Met_Synth_N"/>
</dbReference>
<dbReference type="InterPro" id="IPR006276">
    <property type="entry name" value="Cobalamin-indep_Met_synthase"/>
</dbReference>
<dbReference type="InterPro" id="IPR002629">
    <property type="entry name" value="Met_Synth_C/arc"/>
</dbReference>
<dbReference type="InterPro" id="IPR038071">
    <property type="entry name" value="UROD/MetE-like_sf"/>
</dbReference>
<dbReference type="NCBIfam" id="TIGR01371">
    <property type="entry name" value="met_syn_B12ind"/>
    <property type="match status" value="1"/>
</dbReference>
<dbReference type="NCBIfam" id="NF003556">
    <property type="entry name" value="PRK05222.1"/>
    <property type="match status" value="1"/>
</dbReference>
<dbReference type="PANTHER" id="PTHR30519">
    <property type="entry name" value="5-METHYLTETRAHYDROPTEROYLTRIGLUTAMATE--HOMOCYSTEINE METHYLTRANSFERASE"/>
    <property type="match status" value="1"/>
</dbReference>
<dbReference type="Pfam" id="PF08267">
    <property type="entry name" value="Meth_synt_1"/>
    <property type="match status" value="1"/>
</dbReference>
<dbReference type="Pfam" id="PF01717">
    <property type="entry name" value="Meth_synt_2"/>
    <property type="match status" value="1"/>
</dbReference>
<dbReference type="PIRSF" id="PIRSF000382">
    <property type="entry name" value="MeTrfase_B12_ind"/>
    <property type="match status" value="1"/>
</dbReference>
<dbReference type="SUPFAM" id="SSF51726">
    <property type="entry name" value="UROD/MetE-like"/>
    <property type="match status" value="2"/>
</dbReference>
<proteinExistence type="inferred from homology"/>
<accession>A1KTL3</accession>
<protein>
    <recommendedName>
        <fullName evidence="1">5-methyltetrahydropteroyltriglutamate--homocysteine methyltransferase</fullName>
        <ecNumber evidence="1">2.1.1.14</ecNumber>
    </recommendedName>
    <alternativeName>
        <fullName evidence="1">Cobalamin-independent methionine synthase</fullName>
    </alternativeName>
    <alternativeName>
        <fullName evidence="1">Methionine synthase, vitamin-B12 independent isozyme</fullName>
    </alternativeName>
</protein>
<feature type="chain" id="PRO_1000017258" description="5-methyltetrahydropteroyltriglutamate--homocysteine methyltransferase">
    <location>
        <begin position="1"/>
        <end position="758"/>
    </location>
</feature>
<feature type="active site" description="Proton donor" evidence="1">
    <location>
        <position position="696"/>
    </location>
</feature>
<feature type="binding site" evidence="1">
    <location>
        <begin position="16"/>
        <end position="19"/>
    </location>
    <ligand>
        <name>5-methyltetrahydropteroyltri-L-glutamate</name>
        <dbReference type="ChEBI" id="CHEBI:58207"/>
    </ligand>
</feature>
<feature type="binding site" evidence="1">
    <location>
        <position position="112"/>
    </location>
    <ligand>
        <name>5-methyltetrahydropteroyltri-L-glutamate</name>
        <dbReference type="ChEBI" id="CHEBI:58207"/>
    </ligand>
</feature>
<feature type="binding site" evidence="1">
    <location>
        <begin position="433"/>
        <end position="435"/>
    </location>
    <ligand>
        <name>L-homocysteine</name>
        <dbReference type="ChEBI" id="CHEBI:58199"/>
    </ligand>
</feature>
<feature type="binding site" evidence="1">
    <location>
        <begin position="433"/>
        <end position="435"/>
    </location>
    <ligand>
        <name>L-methionine</name>
        <dbReference type="ChEBI" id="CHEBI:57844"/>
    </ligand>
</feature>
<feature type="binding site" evidence="1">
    <location>
        <position position="486"/>
    </location>
    <ligand>
        <name>L-homocysteine</name>
        <dbReference type="ChEBI" id="CHEBI:58199"/>
    </ligand>
</feature>
<feature type="binding site" evidence="1">
    <location>
        <position position="486"/>
    </location>
    <ligand>
        <name>L-methionine</name>
        <dbReference type="ChEBI" id="CHEBI:57844"/>
    </ligand>
</feature>
<feature type="binding site" evidence="1">
    <location>
        <begin position="517"/>
        <end position="518"/>
    </location>
    <ligand>
        <name>5-methyltetrahydropteroyltri-L-glutamate</name>
        <dbReference type="ChEBI" id="CHEBI:58207"/>
    </ligand>
</feature>
<feature type="binding site" evidence="1">
    <location>
        <position position="563"/>
    </location>
    <ligand>
        <name>5-methyltetrahydropteroyltri-L-glutamate</name>
        <dbReference type="ChEBI" id="CHEBI:58207"/>
    </ligand>
</feature>
<feature type="binding site" evidence="1">
    <location>
        <position position="601"/>
    </location>
    <ligand>
        <name>L-homocysteine</name>
        <dbReference type="ChEBI" id="CHEBI:58199"/>
    </ligand>
</feature>
<feature type="binding site" evidence="1">
    <location>
        <position position="601"/>
    </location>
    <ligand>
        <name>L-methionine</name>
        <dbReference type="ChEBI" id="CHEBI:57844"/>
    </ligand>
</feature>
<feature type="binding site" evidence="1">
    <location>
        <position position="607"/>
    </location>
    <ligand>
        <name>5-methyltetrahydropteroyltri-L-glutamate</name>
        <dbReference type="ChEBI" id="CHEBI:58207"/>
    </ligand>
</feature>
<feature type="binding site" evidence="1">
    <location>
        <position position="643"/>
    </location>
    <ligand>
        <name>Zn(2+)</name>
        <dbReference type="ChEBI" id="CHEBI:29105"/>
        <note>catalytic</note>
    </ligand>
</feature>
<feature type="binding site" evidence="1">
    <location>
        <position position="645"/>
    </location>
    <ligand>
        <name>Zn(2+)</name>
        <dbReference type="ChEBI" id="CHEBI:29105"/>
        <note>catalytic</note>
    </ligand>
</feature>
<feature type="binding site" evidence="1">
    <location>
        <position position="667"/>
    </location>
    <ligand>
        <name>Zn(2+)</name>
        <dbReference type="ChEBI" id="CHEBI:29105"/>
        <note>catalytic</note>
    </ligand>
</feature>
<feature type="binding site" evidence="1">
    <location>
        <position position="728"/>
    </location>
    <ligand>
        <name>Zn(2+)</name>
        <dbReference type="ChEBI" id="CHEBI:29105"/>
        <note>catalytic</note>
    </ligand>
</feature>